<name>ERG_HUMAN</name>
<accession>P11308</accession>
<accession>B4DTW5</accession>
<accession>B4E0T4</accession>
<accession>Q16113</accession>
<accession>Q6XXX4</accession>
<accession>Q6XXX5</accession>
<accession>Q8IXK9</accession>
<feature type="chain" id="PRO_0000204103" description="Transcriptional regulator ERG">
    <location>
        <begin position="1"/>
        <end position="479"/>
    </location>
</feature>
<feature type="domain" description="PNT" evidence="3">
    <location>
        <begin position="113"/>
        <end position="199"/>
    </location>
</feature>
<feature type="DNA-binding region" description="ETS" evidence="2">
    <location>
        <begin position="311"/>
        <end position="391"/>
    </location>
</feature>
<feature type="region of interest" description="Disordered" evidence="4">
    <location>
        <begin position="34"/>
        <end position="56"/>
    </location>
</feature>
<feature type="region of interest" description="Disordered" evidence="4">
    <location>
        <begin position="72"/>
        <end position="92"/>
    </location>
</feature>
<feature type="region of interest" description="Disordered" evidence="4">
    <location>
        <begin position="242"/>
        <end position="293"/>
    </location>
</feature>
<feature type="compositionally biased region" description="Polar residues" evidence="4">
    <location>
        <begin position="34"/>
        <end position="47"/>
    </location>
</feature>
<feature type="compositionally biased region" description="Polar residues" evidence="4">
    <location>
        <begin position="267"/>
        <end position="281"/>
    </location>
</feature>
<feature type="site" description="Breakpoint for translocation to form ELF4-ERG oncogene">
    <location>
        <begin position="462"/>
        <end position="463"/>
    </location>
</feature>
<feature type="modified residue" description="Phosphoserine" evidence="1">
    <location>
        <position position="48"/>
    </location>
</feature>
<feature type="modified residue" description="Phosphoserine" evidence="1">
    <location>
        <position position="81"/>
    </location>
</feature>
<feature type="modified residue" description="Phosphoserine" evidence="1">
    <location>
        <position position="96"/>
    </location>
</feature>
<feature type="cross-link" description="Glycyl lysine isopeptide (Lys-Gly) (interchain with G-Cter in SUMO2)" evidence="11">
    <location>
        <position position="282"/>
    </location>
</feature>
<feature type="splice variant" id="VSP_060677" description="In isoform 4.">
    <location>
        <begin position="1"/>
        <end position="92"/>
    </location>
</feature>
<feature type="splice variant" id="VSP_060678" description="In isoform 2, isoform 3, isoform 5 and isoform 6.">
    <original>MAST</original>
    <variation>MIQTVPDPAAH</variation>
    <location>
        <begin position="1"/>
        <end position="4"/>
    </location>
</feature>
<feature type="splice variant" id="VSP_060679" description="In isoform 3 and isoform 4.">
    <location>
        <begin position="225"/>
        <end position="248"/>
    </location>
</feature>
<feature type="splice variant" id="VSP_060680" description="In isoform 6.">
    <original>DLPYEPPRRSAWTGHGHPTPQSKAAQPSPSTVPKTEDQRPQLDPYQILGPTSSRLANPGSGQIQLWQFLL</original>
    <variation>GTKTPLCDLFIERHPRCPAEIRALSHVIQRELIPELKPVPDSLILPLLIWRLNPLKPFHSKTTLKELRAD</variation>
    <location>
        <begin position="249"/>
        <end position="318"/>
    </location>
</feature>
<feature type="splice variant" id="VSP_060681" description="In isoform 5.">
    <original>SGQ</original>
    <variation>WTQ</variation>
    <location>
        <begin position="308"/>
        <end position="310"/>
    </location>
</feature>
<feature type="splice variant" id="VSP_060682" description="In isoform 5.">
    <location>
        <begin position="311"/>
        <end position="479"/>
    </location>
</feature>
<feature type="splice variant" id="VSP_060683" description="In isoform 6.">
    <location>
        <begin position="319"/>
        <end position="479"/>
    </location>
</feature>
<feature type="helix" evidence="12">
    <location>
        <begin position="109"/>
        <end position="112"/>
    </location>
</feature>
<feature type="turn" evidence="12">
    <location>
        <begin position="120"/>
        <end position="123"/>
    </location>
</feature>
<feature type="strand" evidence="12">
    <location>
        <begin position="124"/>
        <end position="127"/>
    </location>
</feature>
<feature type="helix" evidence="12">
    <location>
        <begin position="136"/>
        <end position="150"/>
    </location>
</feature>
<feature type="helix" evidence="12">
    <location>
        <begin position="157"/>
        <end position="159"/>
    </location>
</feature>
<feature type="helix" evidence="12">
    <location>
        <begin position="165"/>
        <end position="168"/>
    </location>
</feature>
<feature type="helix" evidence="12">
    <location>
        <begin position="173"/>
        <end position="176"/>
    </location>
</feature>
<feature type="turn" evidence="12">
    <location>
        <begin position="177"/>
        <end position="179"/>
    </location>
</feature>
<feature type="helix" evidence="12">
    <location>
        <begin position="182"/>
        <end position="195"/>
    </location>
</feature>
<feature type="helix" evidence="13">
    <location>
        <begin position="313"/>
        <end position="321"/>
    </location>
</feature>
<feature type="helix" evidence="13">
    <location>
        <begin position="324"/>
        <end position="326"/>
    </location>
</feature>
<feature type="turn" evidence="13">
    <location>
        <begin position="327"/>
        <end position="329"/>
    </location>
</feature>
<feature type="strand" evidence="14">
    <location>
        <begin position="331"/>
        <end position="333"/>
    </location>
</feature>
<feature type="turn" evidence="14">
    <location>
        <begin position="334"/>
        <end position="337"/>
    </location>
</feature>
<feature type="strand" evidence="13">
    <location>
        <begin position="338"/>
        <end position="340"/>
    </location>
</feature>
<feature type="helix" evidence="13">
    <location>
        <begin position="344"/>
        <end position="355"/>
    </location>
</feature>
<feature type="helix" evidence="13">
    <location>
        <begin position="362"/>
        <end position="374"/>
    </location>
</feature>
<feature type="strand" evidence="13">
    <location>
        <begin position="377"/>
        <end position="380"/>
    </location>
</feature>
<feature type="strand" evidence="13">
    <location>
        <begin position="387"/>
        <end position="390"/>
    </location>
</feature>
<feature type="helix" evidence="13">
    <location>
        <begin position="392"/>
        <end position="398"/>
    </location>
</feature>
<proteinExistence type="evidence at protein level"/>
<organism>
    <name type="scientific">Homo sapiens</name>
    <name type="common">Human</name>
    <dbReference type="NCBI Taxonomy" id="9606"/>
    <lineage>
        <taxon>Eukaryota</taxon>
        <taxon>Metazoa</taxon>
        <taxon>Chordata</taxon>
        <taxon>Craniata</taxon>
        <taxon>Vertebrata</taxon>
        <taxon>Euteleostomi</taxon>
        <taxon>Mammalia</taxon>
        <taxon>Eutheria</taxon>
        <taxon>Euarchontoglires</taxon>
        <taxon>Primates</taxon>
        <taxon>Haplorrhini</taxon>
        <taxon>Catarrhini</taxon>
        <taxon>Hominidae</taxon>
        <taxon>Homo</taxon>
    </lineage>
</organism>
<gene>
    <name type="primary">ERG</name>
</gene>
<dbReference type="EMBL" id="M17254">
    <property type="protein sequence ID" value="AAA52398.1"/>
    <property type="molecule type" value="mRNA"/>
</dbReference>
<dbReference type="EMBL" id="M21535">
    <property type="protein sequence ID" value="AAA35811.1"/>
    <property type="molecule type" value="mRNA"/>
</dbReference>
<dbReference type="EMBL" id="AY204741">
    <property type="protein sequence ID" value="AAP41719.1"/>
    <property type="molecule type" value="mRNA"/>
</dbReference>
<dbReference type="EMBL" id="AY204742">
    <property type="protein sequence ID" value="AAP41720.1"/>
    <property type="molecule type" value="mRNA"/>
</dbReference>
<dbReference type="EMBL" id="AK300395">
    <property type="protein sequence ID" value="BAG62127.1"/>
    <property type="molecule type" value="mRNA"/>
</dbReference>
<dbReference type="EMBL" id="AK303518">
    <property type="protein sequence ID" value="BAG64546.1"/>
    <property type="molecule type" value="mRNA"/>
</dbReference>
<dbReference type="EMBL" id="BC040168">
    <property type="protein sequence ID" value="AAH40168.1"/>
    <property type="molecule type" value="mRNA"/>
</dbReference>
<dbReference type="EMBL" id="S68130">
    <property type="protein sequence ID" value="AAB29724.1"/>
    <property type="molecule type" value="mRNA"/>
</dbReference>
<dbReference type="CCDS" id="CCDS13657.1">
    <molecule id="P11308-1"/>
</dbReference>
<dbReference type="CCDS" id="CCDS13658.1">
    <molecule id="P11308-4"/>
</dbReference>
<dbReference type="CCDS" id="CCDS46648.1">
    <molecule id="P11308-3"/>
</dbReference>
<dbReference type="CCDS" id="CCDS58789.1">
    <molecule id="P11308-2"/>
</dbReference>
<dbReference type="PIR" id="A94294">
    <property type="entry name" value="TVHUEG"/>
</dbReference>
<dbReference type="RefSeq" id="NP_001129626.1">
    <molecule id="P11308-3"/>
    <property type="nucleotide sequence ID" value="NM_001136154.1"/>
</dbReference>
<dbReference type="RefSeq" id="NP_001129627.1">
    <property type="nucleotide sequence ID" value="NM_001136155.1"/>
</dbReference>
<dbReference type="RefSeq" id="NP_001230357.1">
    <molecule id="P11308-3"/>
    <property type="nucleotide sequence ID" value="NM_001243428.1"/>
</dbReference>
<dbReference type="RefSeq" id="NP_001230358.1">
    <molecule id="P11308-2"/>
    <property type="nucleotide sequence ID" value="NM_001243429.1"/>
</dbReference>
<dbReference type="RefSeq" id="NP_001230361.1">
    <molecule id="P11308-5"/>
    <property type="nucleotide sequence ID" value="NM_001243432.2"/>
</dbReference>
<dbReference type="RefSeq" id="NP_001278320.1">
    <molecule id="P11308-6"/>
    <property type="nucleotide sequence ID" value="NM_001291391.1"/>
</dbReference>
<dbReference type="RefSeq" id="NP_004440.1">
    <molecule id="P11308-1"/>
    <property type="nucleotide sequence ID" value="NM_004449.4"/>
</dbReference>
<dbReference type="RefSeq" id="NP_891548.1">
    <molecule id="P11308-4"/>
    <property type="nucleotide sequence ID" value="NM_182918.4"/>
</dbReference>
<dbReference type="PDB" id="1SXE">
    <property type="method" value="NMR"/>
    <property type="chains" value="A=108-201"/>
</dbReference>
<dbReference type="PDB" id="4IRG">
    <property type="method" value="X-ray"/>
    <property type="resolution" value="1.70 A"/>
    <property type="chains" value="A=306-405"/>
</dbReference>
<dbReference type="PDB" id="4IRH">
    <property type="method" value="X-ray"/>
    <property type="resolution" value="2.10 A"/>
    <property type="chains" value="A=280-405"/>
</dbReference>
<dbReference type="PDB" id="4IRI">
    <property type="method" value="X-ray"/>
    <property type="resolution" value="2.77 A"/>
    <property type="chains" value="A=280-405"/>
</dbReference>
<dbReference type="PDB" id="5YBC">
    <property type="method" value="X-ray"/>
    <property type="resolution" value="2.50 A"/>
    <property type="chains" value="A/C=310-401"/>
</dbReference>
<dbReference type="PDB" id="5YBD">
    <property type="method" value="X-ray"/>
    <property type="resolution" value="2.77 A"/>
    <property type="chains" value="A/X=310-399"/>
</dbReference>
<dbReference type="PDB" id="6VGE">
    <property type="method" value="X-ray"/>
    <property type="resolution" value="4.25 A"/>
    <property type="chains" value="A=306-419"/>
</dbReference>
<dbReference type="PDB" id="6VGG">
    <property type="method" value="X-ray"/>
    <property type="resolution" value="4.31 A"/>
    <property type="chains" value="A=306-419"/>
</dbReference>
<dbReference type="PDBsum" id="1SXE"/>
<dbReference type="PDBsum" id="4IRG"/>
<dbReference type="PDBsum" id="4IRH"/>
<dbReference type="PDBsum" id="4IRI"/>
<dbReference type="PDBsum" id="5YBC"/>
<dbReference type="PDBsum" id="5YBD"/>
<dbReference type="PDBsum" id="6VGE"/>
<dbReference type="PDBsum" id="6VGG"/>
<dbReference type="BMRB" id="P11308"/>
<dbReference type="SMR" id="P11308"/>
<dbReference type="BioGRID" id="108389">
    <property type="interactions" value="219"/>
</dbReference>
<dbReference type="CORUM" id="P11308"/>
<dbReference type="DIP" id="DIP-31028N"/>
<dbReference type="ELM" id="P11308"/>
<dbReference type="FunCoup" id="P11308">
    <property type="interactions" value="1119"/>
</dbReference>
<dbReference type="IntAct" id="P11308">
    <property type="interactions" value="138"/>
</dbReference>
<dbReference type="MINT" id="P11308"/>
<dbReference type="STRING" id="9606.ENSP00000414150"/>
<dbReference type="BindingDB" id="P11308"/>
<dbReference type="ChEMBL" id="CHEMBL1293191"/>
<dbReference type="GlyGen" id="P11308">
    <property type="glycosylation" value="1 site, 1 O-linked glycan (1 site)"/>
</dbReference>
<dbReference type="iPTMnet" id="P11308"/>
<dbReference type="PhosphoSitePlus" id="P11308"/>
<dbReference type="BioMuta" id="ERG"/>
<dbReference type="DMDM" id="152031600"/>
<dbReference type="MassIVE" id="P11308"/>
<dbReference type="PaxDb" id="9606-ENSP00000414150"/>
<dbReference type="PeptideAtlas" id="P11308"/>
<dbReference type="ProteomicsDB" id="52735">
    <molecule id="P11308-3"/>
</dbReference>
<dbReference type="ProteomicsDB" id="52736">
    <molecule id="P11308-1"/>
</dbReference>
<dbReference type="ProteomicsDB" id="52737">
    <molecule id="P11308-2"/>
</dbReference>
<dbReference type="ProteomicsDB" id="52738">
    <molecule id="P11308-4"/>
</dbReference>
<dbReference type="ProteomicsDB" id="52739">
    <molecule id="P11308-5"/>
</dbReference>
<dbReference type="ProteomicsDB" id="52740">
    <molecule id="P11308-6"/>
</dbReference>
<dbReference type="TopDownProteomics" id="P11308-6">
    <molecule id="P11308-6"/>
</dbReference>
<dbReference type="ABCD" id="P11308">
    <property type="antibodies" value="1 sequenced antibody"/>
</dbReference>
<dbReference type="Antibodypedia" id="4338">
    <property type="antibodies" value="690 antibodies from 41 providers"/>
</dbReference>
<dbReference type="DNASU" id="2078"/>
<dbReference type="Ensembl" id="ENST00000288319.12">
    <molecule id="P11308-4"/>
    <property type="protein sequence ID" value="ENSP00000288319.7"/>
    <property type="gene ID" value="ENSG00000157554.20"/>
</dbReference>
<dbReference type="Ensembl" id="ENST00000398897.5">
    <molecule id="P11308-2"/>
    <property type="protein sequence ID" value="ENSP00000381871.1"/>
    <property type="gene ID" value="ENSG00000157554.20"/>
</dbReference>
<dbReference type="Ensembl" id="ENST00000398911.5">
    <molecule id="P11308-1"/>
    <property type="protein sequence ID" value="ENSP00000381882.1"/>
    <property type="gene ID" value="ENSG00000157554.20"/>
</dbReference>
<dbReference type="Ensembl" id="ENST00000398919.6">
    <molecule id="P11308-3"/>
    <property type="protein sequence ID" value="ENSP00000381891.2"/>
    <property type="gene ID" value="ENSG00000157554.20"/>
</dbReference>
<dbReference type="Ensembl" id="ENST00000417133.6">
    <molecule id="P11308-3"/>
    <property type="protein sequence ID" value="ENSP00000414150.2"/>
    <property type="gene ID" value="ENSG00000157554.20"/>
</dbReference>
<dbReference type="Ensembl" id="ENST00000442448.5">
    <molecule id="P11308-1"/>
    <property type="protein sequence ID" value="ENSP00000394694.1"/>
    <property type="gene ID" value="ENSG00000157554.20"/>
</dbReference>
<dbReference type="GeneID" id="2078"/>
<dbReference type="KEGG" id="hsa:2078"/>
<dbReference type="MANE-Select" id="ENST00000288319.12">
    <property type="protein sequence ID" value="ENSP00000288319.7"/>
    <property type="RefSeq nucleotide sequence ID" value="NM_182918.4"/>
    <property type="RefSeq protein sequence ID" value="NP_891548.1"/>
</dbReference>
<dbReference type="UCSC" id="uc002yxa.4">
    <molecule id="P11308-4"/>
    <property type="organism name" value="human"/>
</dbReference>
<dbReference type="AGR" id="HGNC:3446"/>
<dbReference type="CTD" id="2078"/>
<dbReference type="DisGeNET" id="2078"/>
<dbReference type="GeneCards" id="ERG"/>
<dbReference type="HGNC" id="HGNC:3446">
    <property type="gene designation" value="ERG"/>
</dbReference>
<dbReference type="HPA" id="ENSG00000157554">
    <property type="expression patterns" value="Low tissue specificity"/>
</dbReference>
<dbReference type="MalaCards" id="ERG"/>
<dbReference type="MIM" id="165080">
    <property type="type" value="gene"/>
</dbReference>
<dbReference type="MIM" id="612219">
    <property type="type" value="phenotype"/>
</dbReference>
<dbReference type="MIM" id="620602">
    <property type="type" value="phenotype"/>
</dbReference>
<dbReference type="neXtProt" id="NX_P11308"/>
<dbReference type="OpenTargets" id="ENSG00000157554"/>
<dbReference type="Orphanet" id="370334">
    <property type="disease" value="Extraskeletal Ewing sarcoma"/>
</dbReference>
<dbReference type="Orphanet" id="319">
    <property type="disease" value="Skeletal Ewing sarcoma"/>
</dbReference>
<dbReference type="PharmGKB" id="PA27858"/>
<dbReference type="VEuPathDB" id="HostDB:ENSG00000157554"/>
<dbReference type="eggNOG" id="KOG3806">
    <property type="taxonomic scope" value="Eukaryota"/>
</dbReference>
<dbReference type="GeneTree" id="ENSGT00940000160662"/>
<dbReference type="HOGENOM" id="CLU_045216_0_0_1"/>
<dbReference type="InParanoid" id="P11308"/>
<dbReference type="OMA" id="RVPQQEW"/>
<dbReference type="OrthoDB" id="10067219at2759"/>
<dbReference type="PAN-GO" id="P11308">
    <property type="GO annotations" value="4 GO annotations based on evolutionary models"/>
</dbReference>
<dbReference type="PhylomeDB" id="P11308"/>
<dbReference type="TreeFam" id="TF350537"/>
<dbReference type="PathwayCommons" id="P11308"/>
<dbReference type="SignaLink" id="P11308"/>
<dbReference type="SIGNOR" id="P11308"/>
<dbReference type="BioGRID-ORCS" id="2078">
    <property type="hits" value="14 hits in 1177 CRISPR screens"/>
</dbReference>
<dbReference type="CD-CODE" id="F85A2E29">
    <property type="entry name" value="IMP1 RNP granule"/>
</dbReference>
<dbReference type="ChiTaRS" id="ERG">
    <property type="organism name" value="human"/>
</dbReference>
<dbReference type="EvolutionaryTrace" id="P11308"/>
<dbReference type="GeneWiki" id="ERG_(gene)"/>
<dbReference type="GenomeRNAi" id="2078"/>
<dbReference type="Pharos" id="P11308">
    <property type="development level" value="Tbio"/>
</dbReference>
<dbReference type="PRO" id="PR:P11308"/>
<dbReference type="Proteomes" id="UP000005640">
    <property type="component" value="Chromosome 21"/>
</dbReference>
<dbReference type="RNAct" id="P11308">
    <property type="molecule type" value="protein"/>
</dbReference>
<dbReference type="Bgee" id="ENSG00000157554">
    <property type="expression patterns" value="Expressed in tendon of biceps brachii and 165 other cell types or tissues"/>
</dbReference>
<dbReference type="ExpressionAtlas" id="P11308">
    <property type="expression patterns" value="baseline and differential"/>
</dbReference>
<dbReference type="GO" id="GO:0000785">
    <property type="term" value="C:chromatin"/>
    <property type="evidence" value="ECO:0000247"/>
    <property type="project" value="NTNU_SB"/>
</dbReference>
<dbReference type="GO" id="GO:0005829">
    <property type="term" value="C:cytosol"/>
    <property type="evidence" value="ECO:0000314"/>
    <property type="project" value="HPA"/>
</dbReference>
<dbReference type="GO" id="GO:0005654">
    <property type="term" value="C:nucleoplasm"/>
    <property type="evidence" value="ECO:0000314"/>
    <property type="project" value="HPA"/>
</dbReference>
<dbReference type="GO" id="GO:0005634">
    <property type="term" value="C:nucleus"/>
    <property type="evidence" value="ECO:0000318"/>
    <property type="project" value="GO_Central"/>
</dbReference>
<dbReference type="GO" id="GO:1990904">
    <property type="term" value="C:ribonucleoprotein complex"/>
    <property type="evidence" value="ECO:0000314"/>
    <property type="project" value="UniProtKB"/>
</dbReference>
<dbReference type="GO" id="GO:0003682">
    <property type="term" value="F:chromatin binding"/>
    <property type="evidence" value="ECO:0007669"/>
    <property type="project" value="Ensembl"/>
</dbReference>
<dbReference type="GO" id="GO:0003677">
    <property type="term" value="F:DNA binding"/>
    <property type="evidence" value="ECO:0000304"/>
    <property type="project" value="ProtInc"/>
</dbReference>
<dbReference type="GO" id="GO:0001228">
    <property type="term" value="F:DNA-binding transcription activator activity, RNA polymerase II-specific"/>
    <property type="evidence" value="ECO:0000315"/>
    <property type="project" value="NTNU_SB"/>
</dbReference>
<dbReference type="GO" id="GO:0000981">
    <property type="term" value="F:DNA-binding transcription factor activity, RNA polymerase II-specific"/>
    <property type="evidence" value="ECO:0000247"/>
    <property type="project" value="NTNU_SB"/>
</dbReference>
<dbReference type="GO" id="GO:0000978">
    <property type="term" value="F:RNA polymerase II cis-regulatory region sequence-specific DNA binding"/>
    <property type="evidence" value="ECO:0000314"/>
    <property type="project" value="NTNU_SB"/>
</dbReference>
<dbReference type="GO" id="GO:1990837">
    <property type="term" value="F:sequence-specific double-stranded DNA binding"/>
    <property type="evidence" value="ECO:0000314"/>
    <property type="project" value="ARUK-UCL"/>
</dbReference>
<dbReference type="GO" id="GO:0030154">
    <property type="term" value="P:cell differentiation"/>
    <property type="evidence" value="ECO:0000318"/>
    <property type="project" value="GO_Central"/>
</dbReference>
<dbReference type="GO" id="GO:0045944">
    <property type="term" value="P:positive regulation of transcription by RNA polymerase II"/>
    <property type="evidence" value="ECO:0000314"/>
    <property type="project" value="NTNU_SB"/>
</dbReference>
<dbReference type="GO" id="GO:0006468">
    <property type="term" value="P:protein phosphorylation"/>
    <property type="evidence" value="ECO:0000304"/>
    <property type="project" value="ProtInc"/>
</dbReference>
<dbReference type="GO" id="GO:0006357">
    <property type="term" value="P:regulation of transcription by RNA polymerase II"/>
    <property type="evidence" value="ECO:0000318"/>
    <property type="project" value="GO_Central"/>
</dbReference>
<dbReference type="GO" id="GO:0007165">
    <property type="term" value="P:signal transduction"/>
    <property type="evidence" value="ECO:0000304"/>
    <property type="project" value="ProtInc"/>
</dbReference>
<dbReference type="CDD" id="cd08540">
    <property type="entry name" value="SAM_PNT-ERG"/>
    <property type="match status" value="1"/>
</dbReference>
<dbReference type="FunFam" id="1.10.150.50:FF:000010">
    <property type="entry name" value="Fli-1 proto-oncogene, ETS transcription factor"/>
    <property type="match status" value="1"/>
</dbReference>
<dbReference type="FunFam" id="1.10.10.10:FF:000039">
    <property type="entry name" value="Friend leukemia integration 1 transcription factor"/>
    <property type="match status" value="1"/>
</dbReference>
<dbReference type="Gene3D" id="1.10.150.50">
    <property type="entry name" value="Transcription Factor, Ets-1"/>
    <property type="match status" value="1"/>
</dbReference>
<dbReference type="Gene3D" id="1.10.10.10">
    <property type="entry name" value="Winged helix-like DNA-binding domain superfamily/Winged helix DNA-binding domain"/>
    <property type="match status" value="1"/>
</dbReference>
<dbReference type="InterPro" id="IPR000418">
    <property type="entry name" value="Ets_dom"/>
</dbReference>
<dbReference type="InterPro" id="IPR046328">
    <property type="entry name" value="ETS_fam"/>
</dbReference>
<dbReference type="InterPro" id="IPR003118">
    <property type="entry name" value="Pointed_dom"/>
</dbReference>
<dbReference type="InterPro" id="IPR013761">
    <property type="entry name" value="SAM/pointed_sf"/>
</dbReference>
<dbReference type="InterPro" id="IPR036388">
    <property type="entry name" value="WH-like_DNA-bd_sf"/>
</dbReference>
<dbReference type="InterPro" id="IPR036390">
    <property type="entry name" value="WH_DNA-bd_sf"/>
</dbReference>
<dbReference type="PANTHER" id="PTHR11849">
    <property type="entry name" value="ETS"/>
    <property type="match status" value="1"/>
</dbReference>
<dbReference type="PANTHER" id="PTHR11849:SF216">
    <property type="entry name" value="TRANSCRIPTIONAL REGULATOR ERG"/>
    <property type="match status" value="1"/>
</dbReference>
<dbReference type="Pfam" id="PF00178">
    <property type="entry name" value="Ets"/>
    <property type="match status" value="1"/>
</dbReference>
<dbReference type="Pfam" id="PF02198">
    <property type="entry name" value="SAM_PNT"/>
    <property type="match status" value="1"/>
</dbReference>
<dbReference type="PRINTS" id="PR00454">
    <property type="entry name" value="ETSDOMAIN"/>
</dbReference>
<dbReference type="SMART" id="SM00413">
    <property type="entry name" value="ETS"/>
    <property type="match status" value="1"/>
</dbReference>
<dbReference type="SMART" id="SM00251">
    <property type="entry name" value="SAM_PNT"/>
    <property type="match status" value="1"/>
</dbReference>
<dbReference type="SUPFAM" id="SSF47769">
    <property type="entry name" value="SAM/Pointed domain"/>
    <property type="match status" value="1"/>
</dbReference>
<dbReference type="SUPFAM" id="SSF46785">
    <property type="entry name" value="Winged helix' DNA-binding domain"/>
    <property type="match status" value="1"/>
</dbReference>
<dbReference type="PROSITE" id="PS00345">
    <property type="entry name" value="ETS_DOMAIN_1"/>
    <property type="match status" value="1"/>
</dbReference>
<dbReference type="PROSITE" id="PS00346">
    <property type="entry name" value="ETS_DOMAIN_2"/>
    <property type="match status" value="1"/>
</dbReference>
<dbReference type="PROSITE" id="PS50061">
    <property type="entry name" value="ETS_DOMAIN_3"/>
    <property type="match status" value="1"/>
</dbReference>
<dbReference type="PROSITE" id="PS51433">
    <property type="entry name" value="PNT"/>
    <property type="match status" value="1"/>
</dbReference>
<reference key="1">
    <citation type="journal article" date="1987" name="Science">
        <title>erg, a human ets-related gene on chromosome 21: alternative splicing, polyadenylation, and translation.</title>
        <authorList>
            <person name="Rao V.N."/>
            <person name="Papas T.S."/>
            <person name="Shyam E."/>
            <person name="Reddy P."/>
        </authorList>
    </citation>
    <scope>NUCLEOTIDE SEQUENCE [MRNA] (ISOFORM 3)</scope>
</reference>
<reference key="2">
    <citation type="journal article" date="1987" name="Proc. Natl. Acad. Sci. U.S.A.">
        <title>The erg gene: a human gene related to the ets oncogene.</title>
        <authorList>
            <person name="Reddy E.S.P."/>
            <person name="Rao V.N."/>
            <person name="Papas T.S."/>
        </authorList>
    </citation>
    <scope>NUCLEOTIDE SEQUENCE [MRNA] (ISOFORM 4)</scope>
</reference>
<reference key="3">
    <citation type="journal article" date="2004" name="Gene">
        <title>Detailed mapping of the ERG-ETS2 interval of human chromosome 21 and comparison with the region of conserved synteny on mouse chromosome 16.</title>
        <authorList>
            <person name="Owczarek C.M."/>
            <person name="Portbury K.J."/>
            <person name="Hardy M.P."/>
            <person name="O'Leary D.A."/>
            <person name="Kudoh J."/>
            <person name="Shibuya K."/>
            <person name="Shimizu N."/>
            <person name="Kola I."/>
            <person name="Hertzog P.J."/>
        </authorList>
    </citation>
    <scope>NUCLEOTIDE SEQUENCE [MRNA] (ISOFORMS 5 AND 6)</scope>
</reference>
<reference key="4">
    <citation type="journal article" date="2004" name="Nat. Genet.">
        <title>Complete sequencing and characterization of 21,243 full-length human cDNAs.</title>
        <authorList>
            <person name="Ota T."/>
            <person name="Suzuki Y."/>
            <person name="Nishikawa T."/>
            <person name="Otsuki T."/>
            <person name="Sugiyama T."/>
            <person name="Irie R."/>
            <person name="Wakamatsu A."/>
            <person name="Hayashi K."/>
            <person name="Sato H."/>
            <person name="Nagai K."/>
            <person name="Kimura K."/>
            <person name="Makita H."/>
            <person name="Sekine M."/>
            <person name="Obayashi M."/>
            <person name="Nishi T."/>
            <person name="Shibahara T."/>
            <person name="Tanaka T."/>
            <person name="Ishii S."/>
            <person name="Yamamoto J."/>
            <person name="Saito K."/>
            <person name="Kawai Y."/>
            <person name="Isono Y."/>
            <person name="Nakamura Y."/>
            <person name="Nagahari K."/>
            <person name="Murakami K."/>
            <person name="Yasuda T."/>
            <person name="Iwayanagi T."/>
            <person name="Wagatsuma M."/>
            <person name="Shiratori A."/>
            <person name="Sudo H."/>
            <person name="Hosoiri T."/>
            <person name="Kaku Y."/>
            <person name="Kodaira H."/>
            <person name="Kondo H."/>
            <person name="Sugawara M."/>
            <person name="Takahashi M."/>
            <person name="Kanda K."/>
            <person name="Yokoi T."/>
            <person name="Furuya T."/>
            <person name="Kikkawa E."/>
            <person name="Omura Y."/>
            <person name="Abe K."/>
            <person name="Kamihara K."/>
            <person name="Katsuta N."/>
            <person name="Sato K."/>
            <person name="Tanikawa M."/>
            <person name="Yamazaki M."/>
            <person name="Ninomiya K."/>
            <person name="Ishibashi T."/>
            <person name="Yamashita H."/>
            <person name="Murakawa K."/>
            <person name="Fujimori K."/>
            <person name="Tanai H."/>
            <person name="Kimata M."/>
            <person name="Watanabe M."/>
            <person name="Hiraoka S."/>
            <person name="Chiba Y."/>
            <person name="Ishida S."/>
            <person name="Ono Y."/>
            <person name="Takiguchi S."/>
            <person name="Watanabe S."/>
            <person name="Yosida M."/>
            <person name="Hotuta T."/>
            <person name="Kusano J."/>
            <person name="Kanehori K."/>
            <person name="Takahashi-Fujii A."/>
            <person name="Hara H."/>
            <person name="Tanase T.-O."/>
            <person name="Nomura Y."/>
            <person name="Togiya S."/>
            <person name="Komai F."/>
            <person name="Hara R."/>
            <person name="Takeuchi K."/>
            <person name="Arita M."/>
            <person name="Imose N."/>
            <person name="Musashino K."/>
            <person name="Yuuki H."/>
            <person name="Oshima A."/>
            <person name="Sasaki N."/>
            <person name="Aotsuka S."/>
            <person name="Yoshikawa Y."/>
            <person name="Matsunawa H."/>
            <person name="Ichihara T."/>
            <person name="Shiohata N."/>
            <person name="Sano S."/>
            <person name="Moriya S."/>
            <person name="Momiyama H."/>
            <person name="Satoh N."/>
            <person name="Takami S."/>
            <person name="Terashima Y."/>
            <person name="Suzuki O."/>
            <person name="Nakagawa S."/>
            <person name="Senoh A."/>
            <person name="Mizoguchi H."/>
            <person name="Goto Y."/>
            <person name="Shimizu F."/>
            <person name="Wakebe H."/>
            <person name="Hishigaki H."/>
            <person name="Watanabe T."/>
            <person name="Sugiyama A."/>
            <person name="Takemoto M."/>
            <person name="Kawakami B."/>
            <person name="Yamazaki M."/>
            <person name="Watanabe K."/>
            <person name="Kumagai A."/>
            <person name="Itakura S."/>
            <person name="Fukuzumi Y."/>
            <person name="Fujimori Y."/>
            <person name="Komiyama M."/>
            <person name="Tashiro H."/>
            <person name="Tanigami A."/>
            <person name="Fujiwara T."/>
            <person name="Ono T."/>
            <person name="Yamada K."/>
            <person name="Fujii Y."/>
            <person name="Ozaki K."/>
            <person name="Hirao M."/>
            <person name="Ohmori Y."/>
            <person name="Kawabata A."/>
            <person name="Hikiji T."/>
            <person name="Kobatake N."/>
            <person name="Inagaki H."/>
            <person name="Ikema Y."/>
            <person name="Okamoto S."/>
            <person name="Okitani R."/>
            <person name="Kawakami T."/>
            <person name="Noguchi S."/>
            <person name="Itoh T."/>
            <person name="Shigeta K."/>
            <person name="Senba T."/>
            <person name="Matsumura K."/>
            <person name="Nakajima Y."/>
            <person name="Mizuno T."/>
            <person name="Morinaga M."/>
            <person name="Sasaki M."/>
            <person name="Togashi T."/>
            <person name="Oyama M."/>
            <person name="Hata H."/>
            <person name="Watanabe M."/>
            <person name="Komatsu T."/>
            <person name="Mizushima-Sugano J."/>
            <person name="Satoh T."/>
            <person name="Shirai Y."/>
            <person name="Takahashi Y."/>
            <person name="Nakagawa K."/>
            <person name="Okumura K."/>
            <person name="Nagase T."/>
            <person name="Nomura N."/>
            <person name="Kikuchi H."/>
            <person name="Masuho Y."/>
            <person name="Yamashita R."/>
            <person name="Nakai K."/>
            <person name="Yada T."/>
            <person name="Nakamura Y."/>
            <person name="Ohara O."/>
            <person name="Isogai T."/>
            <person name="Sugano S."/>
        </authorList>
    </citation>
    <scope>NUCLEOTIDE SEQUENCE [LARGE SCALE MRNA] (ISOFORMS 1 AND 4)</scope>
    <source>
        <tissue>Thymus</tissue>
    </source>
</reference>
<reference key="5">
    <citation type="journal article" date="2004" name="Genome Res.">
        <title>The status, quality, and expansion of the NIH full-length cDNA project: the Mammalian Gene Collection (MGC).</title>
        <authorList>
            <consortium name="The MGC Project Team"/>
        </authorList>
    </citation>
    <scope>NUCLEOTIDE SEQUENCE [LARGE SCALE MRNA] (ISOFORM 1)</scope>
    <source>
        <tissue>Testis</tissue>
    </source>
</reference>
<reference key="6">
    <citation type="journal article" date="1994" name="Oncogene">
        <title>Differentially spliced erg-3 product functions as a transcriptional activator.</title>
        <authorList>
            <person name="Prasad D.D."/>
            <person name="Rao V.N."/>
            <person name="Lee L."/>
            <person name="Reddy E.S."/>
        </authorList>
    </citation>
    <scope>NUCLEOTIDE SEQUENCE [MRNA] OF 230-259 (ISOFORM 2)</scope>
</reference>
<reference key="7">
    <citation type="journal article" date="1994" name="Cancer Genet. Cytogenet.">
        <title>ERG gene is translocated in an Ewing's sarcoma cell line.</title>
        <authorList>
            <person name="Dunn T."/>
            <person name="Praissman L."/>
            <person name="Hagag N."/>
            <person name="Viola M.V."/>
        </authorList>
    </citation>
    <scope>CHROMOSOMAL TRANSLOCATION WITH EWSR1</scope>
</reference>
<reference key="8">
    <citation type="journal article" date="1994" name="Cancer Res.">
        <title>An RNA-binding protein gene, TLS/FUS, is fused to ERG in human myeloid leukemia with t(16;21) chromosomal translocation.</title>
        <authorList>
            <person name="Ichikawa H."/>
            <person name="Shimizu K."/>
            <person name="Hayashi Y."/>
            <person name="Ohki M."/>
        </authorList>
    </citation>
    <scope>CHROMOSOMAL TRANSLOCATION WITH FUS</scope>
</reference>
<reference key="9">
    <citation type="journal article" date="2006" name="Leuk. Res.">
        <title>ELF4 is fused to ERG in a case of acute myeloid leukemia with a t(X;21)(q25-26;q22).</title>
        <authorList>
            <person name="Moore S.D."/>
            <person name="Offor O."/>
            <person name="Ferry J.A."/>
            <person name="Amrein P.C."/>
            <person name="Morton C.C."/>
            <person name="Dal Cin P."/>
        </authorList>
    </citation>
    <scope>CHROMOSOMAL TRANSLOCATION WITH ELF4</scope>
</reference>
<reference key="10">
    <citation type="journal article" date="2007" name="Mol. Cell. Proteomics">
        <title>Molecular composition of IMP1 ribonucleoprotein granules.</title>
        <authorList>
            <person name="Joeson L."/>
            <person name="Vikesaa J."/>
            <person name="Krogh A."/>
            <person name="Nielsen L.K."/>
            <person name="Hansen T."/>
            <person name="Borup R."/>
            <person name="Johnsen A.H."/>
            <person name="Christiansen J."/>
            <person name="Nielsen F.C."/>
        </authorList>
    </citation>
    <scope>IDENTIFICATION IN A MRNP GRANULE COMPLEX</scope>
    <scope>IDENTIFICATION BY MASS SPECTROMETRY</scope>
    <scope>SUBCELLULAR LOCATION</scope>
</reference>
<reference key="11">
    <citation type="journal article" date="2017" name="Nat. Struct. Mol. Biol.">
        <title>Site-specific mapping of the human SUMO proteome reveals co-modification with phosphorylation.</title>
        <authorList>
            <person name="Hendriks I.A."/>
            <person name="Lyon D."/>
            <person name="Young C."/>
            <person name="Jensen L.J."/>
            <person name="Vertegaal A.C."/>
            <person name="Nielsen M.L."/>
        </authorList>
    </citation>
    <scope>SUMOYLATION [LARGE SCALE ANALYSIS] AT LYS-282</scope>
    <scope>IDENTIFICATION BY MASS SPECTROMETRY [LARGE SCALE ANALYSIS]</scope>
</reference>
<reference key="12">
    <citation type="journal article" date="2004" name="J. Mol. Biol.">
        <title>Diversity in structure and function of the Ets family PNT domains.</title>
        <authorList>
            <person name="Mackereth C.D."/>
            <person name="Scharpf M."/>
            <person name="Gentile L.N."/>
            <person name="MacIntosh S.E."/>
            <person name="Slupsky C.M."/>
            <person name="McIntosh L.P."/>
        </authorList>
    </citation>
    <scope>STRUCTURE BY NMR OF 105-201</scope>
</reference>
<reference key="13">
    <citation type="journal article" date="2023" name="Nat. Med.">
        <title>Genetic association analysis of 77,539 genomes reveals rare disease etiologies.</title>
        <authorList>
            <consortium name="Genomics England Research Consortium"/>
            <person name="Greene D."/>
            <person name="Pirri D."/>
            <person name="Frudd K."/>
            <person name="Sackey E."/>
            <person name="Al-Owain M."/>
            <person name="Giese A.P.J."/>
            <person name="Ramzan K."/>
            <person name="Riaz S."/>
            <person name="Yamanaka I."/>
            <person name="Boeckx N."/>
            <person name="Thys C."/>
            <person name="Gelb B.D."/>
            <person name="Brennan P."/>
            <person name="Hartill V."/>
            <person name="Harvengt J."/>
            <person name="Kosho T."/>
            <person name="Mansour S."/>
            <person name="Masuno M."/>
            <person name="Ohata T."/>
            <person name="Stewart H."/>
            <person name="Taibah K."/>
            <person name="Turner C.L.S."/>
            <person name="Imtiaz F."/>
            <person name="Riazuddin S."/>
            <person name="Morisaki T."/>
            <person name="Ostergaard P."/>
            <person name="Loeys B.L."/>
            <person name="Morisaki H."/>
            <person name="Ahmed Z.M."/>
            <person name="Birdsey G.M."/>
            <person name="Freson K."/>
            <person name="Mumford A."/>
            <person name="Turro E."/>
        </authorList>
    </citation>
    <scope>INVOLVEMENT IN LMPHM14</scope>
</reference>
<evidence type="ECO:0000250" key="1">
    <source>
        <dbReference type="UniProtKB" id="P81270"/>
    </source>
</evidence>
<evidence type="ECO:0000255" key="2">
    <source>
        <dbReference type="PROSITE-ProRule" id="PRU00237"/>
    </source>
</evidence>
<evidence type="ECO:0000255" key="3">
    <source>
        <dbReference type="PROSITE-ProRule" id="PRU00762"/>
    </source>
</evidence>
<evidence type="ECO:0000256" key="4">
    <source>
        <dbReference type="SAM" id="MobiDB-lite"/>
    </source>
</evidence>
<evidence type="ECO:0000269" key="5">
    <source>
    </source>
</evidence>
<evidence type="ECO:0000269" key="6">
    <source>
    </source>
</evidence>
<evidence type="ECO:0000269" key="7">
    <source>
    </source>
</evidence>
<evidence type="ECO:0000269" key="8">
    <source>
    </source>
</evidence>
<evidence type="ECO:0000269" key="9">
    <source>
    </source>
</evidence>
<evidence type="ECO:0000305" key="10"/>
<evidence type="ECO:0007744" key="11">
    <source>
    </source>
</evidence>
<evidence type="ECO:0007829" key="12">
    <source>
        <dbReference type="PDB" id="1SXE"/>
    </source>
</evidence>
<evidence type="ECO:0007829" key="13">
    <source>
        <dbReference type="PDB" id="4IRG"/>
    </source>
</evidence>
<evidence type="ECO:0007829" key="14">
    <source>
        <dbReference type="PDB" id="5YBC"/>
    </source>
</evidence>
<keyword id="KW-0002">3D-structure</keyword>
<keyword id="KW-0025">Alternative splicing</keyword>
<keyword id="KW-0160">Chromosomal rearrangement</keyword>
<keyword id="KW-0963">Cytoplasm</keyword>
<keyword id="KW-0238">DNA-binding</keyword>
<keyword id="KW-1017">Isopeptide bond</keyword>
<keyword id="KW-0539">Nucleus</keyword>
<keyword id="KW-0597">Phosphoprotein</keyword>
<keyword id="KW-1267">Proteomics identification</keyword>
<keyword id="KW-0656">Proto-oncogene</keyword>
<keyword id="KW-1185">Reference proteome</keyword>
<keyword id="KW-0804">Transcription</keyword>
<keyword id="KW-0805">Transcription regulation</keyword>
<keyword id="KW-0832">Ubl conjugation</keyword>
<comment type="function">
    <text>Transcriptional regulator. May participate in transcriptional regulation through the recruitment of SETDB1 histone methyltransferase and subsequent modification of local chromatin structure.</text>
</comment>
<comment type="subunit">
    <text evidence="6">Identified in a IGF2BP1-dependent mRNP granule complex containing untranslated mRNAs. Interacts with SETDB1.</text>
</comment>
<comment type="interaction">
    <interactant intactId="EBI-79704">
        <id>P11308</id>
    </interactant>
    <interactant intactId="EBI-608057">
        <id>P10275</id>
        <label>AR</label>
    </interactant>
    <organismsDiffer>false</organismsDiffer>
    <experiments>4</experiments>
</comment>
<comment type="interaction">
    <interactant intactId="EBI-79704">
        <id>P11308</id>
    </interactant>
    <interactant intactId="EBI-936709">
        <id>O75164</id>
        <label>KDM4A</label>
    </interactant>
    <organismsDiffer>false</organismsDiffer>
    <experiments>2</experiments>
</comment>
<comment type="interaction">
    <interactant intactId="EBI-79704">
        <id>P11308</id>
    </interactant>
    <interactant intactId="EBI-355676">
        <id>P09874</id>
        <label>PARP1</label>
    </interactant>
    <organismsDiffer>false</organismsDiffer>
    <experiments>7</experiments>
</comment>
<comment type="subcellular location">
    <subcellularLocation>
        <location evidence="2 6">Nucleus</location>
    </subcellularLocation>
    <subcellularLocation>
        <location evidence="6">Cytoplasm</location>
    </subcellularLocation>
    <text>Localized in cytoplasmic mRNP granules containing untranslated mRNAs.</text>
</comment>
<comment type="alternative products">
    <event type="alternative splicing"/>
    <isoform>
        <id>P11308-4</id>
        <name>1</name>
        <sequence type="displayed"/>
    </isoform>
    <isoform>
        <id>P11308-3</id>
        <name>2</name>
        <name>ERG-3</name>
        <sequence type="described" ref="VSP_060678"/>
    </isoform>
    <isoform>
        <id>P11308-1</id>
        <name>3</name>
        <name>ERG-2</name>
        <sequence type="described" ref="VSP_060678 VSP_060679"/>
    </isoform>
    <isoform>
        <id>P11308-2</id>
        <name>4</name>
        <name>ERG-1</name>
        <sequence type="described" ref="VSP_060677 VSP_060679"/>
    </isoform>
    <isoform>
        <id>P11308-5</id>
        <name>5</name>
        <sequence type="described" ref="VSP_060678 VSP_060681 VSP_060682"/>
    </isoform>
    <isoform>
        <id>P11308-6</id>
        <name>6</name>
        <sequence type="described" ref="VSP_060678 VSP_060680 VSP_060683"/>
    </isoform>
</comment>
<comment type="disease" evidence="8">
    <disease id="DI-02610">
        <name>Ewing sarcoma</name>
        <acronym>ES</acronym>
        <description>A highly malignant, metastatic, primitive small round cell tumor of bone and soft tissue that affects children and adolescents. It belongs to the Ewing sarcoma family of tumors, a group of morphologically heterogeneous neoplasms that share the same cytogenetic features. They are considered neural tumors derived from cells of the neural crest. Ewing sarcoma represents the less differentiated form of the tumors.</description>
        <dbReference type="MIM" id="612219"/>
    </disease>
    <text evidence="8">The gene represented in this entry is involved in disease pathogenesis. A chromosomal aberration involving ERG has been found in patients with Erwing sarcoma. Translocation t(21;22)(q22;q12) with EWSR1.</text>
</comment>
<comment type="disease">
    <text evidence="5 9">Chromosomal aberrations involving ERG have been found in acute myeloid leukemia (AML). Translocation t(16;21)(p11;q22) with FUS (PubMed:8187069). Translocation t(X;21)(q25-26;q22) with ELF4 (PubMed:16303180).</text>
</comment>
<comment type="disease" evidence="7">
    <disease id="DI-06793">
        <name>Lymphatic malformation 14</name>
        <acronym>LMPHM14</acronym>
        <description>A form of primary lymphedema, a disease characterized by swelling of body parts due to developmental anomalies and functional defects of the lymphatic system. Patients with lymphedema may suffer from recurrent local infections. LMPHM14 is an autosomal dominant form.</description>
        <dbReference type="MIM" id="620602"/>
    </disease>
    <text>The disease is caused by variants affecting the gene represented in this entry.</text>
</comment>
<comment type="similarity">
    <text evidence="10">Belongs to the ETS family.</text>
</comment>
<comment type="online information" name="Atlas of Genetics and Cytogenetics in Oncology and Haematology">
    <link uri="https://atlasgeneticsoncology.org/gene/53/ERG"/>
</comment>
<sequence>MASTIKEALSVVSEDQSLFECAYGTPHLAKTEMTASSSSDYGQTSKMSPRVPQQDWLSQPPARVTIKMECNPSQVNGSRNSPDECSVAKGGKMVGSPDTVGMNYGSYMEEKHMPPPNMTTNERRVIVPADPTLWSTDHVRQWLEWAVKEYGLPDVNILLFQNIDGKELCKMTKDDFQRLTPSYNADILLSHLHYLRETPLPHLTSDDVDKALQNSPRLMHARNTGGAAFIFPNTSVYPEATQRITTRPDLPYEPPRRSAWTGHGHPTPQSKAAQPSPSTVPKTEDQRPQLDPYQILGPTSSRLANPGSGQIQLWQFLLELLSDSSNSSCITWEGTNGEFKMTDPDEVARRWGERKSKPNMNYDKLSRALRYYYDKNIMTKVHGKRYAYKFDFHGIAQALQPHPPESSLYKYPSDLPYMGSYHAHPQKMNFVAPHPPALPVTSSSFFAAPNPYWNSPTGGIYPNTRLPTSHMPSHLGTYY</sequence>
<protein>
    <recommendedName>
        <fullName>Transcriptional regulator ERG</fullName>
    </recommendedName>
    <alternativeName>
        <fullName>Transforming protein ERG</fullName>
    </alternativeName>
</protein>